<dbReference type="EMBL" id="AC069144">
    <property type="status" value="NOT_ANNOTATED_CDS"/>
    <property type="molecule type" value="Genomic_DNA"/>
</dbReference>
<dbReference type="EMBL" id="CP002684">
    <property type="protein sequence ID" value="ANM60728.1"/>
    <property type="molecule type" value="Genomic_DNA"/>
</dbReference>
<dbReference type="RefSeq" id="NP_001322992.1">
    <property type="nucleotide sequence ID" value="NM_001333683.1"/>
</dbReference>
<dbReference type="EnsemblPlants" id="AT1G54957.1">
    <property type="protein sequence ID" value="AT1G54957.1"/>
    <property type="gene ID" value="AT1G54957"/>
</dbReference>
<dbReference type="GeneID" id="28717357"/>
<dbReference type="Gramene" id="AT1G54957.1">
    <property type="protein sequence ID" value="AT1G54957.1"/>
    <property type="gene ID" value="AT1G54957"/>
</dbReference>
<dbReference type="KEGG" id="ath:AT1G54957"/>
<dbReference type="Araport" id="AT1G54957"/>
<dbReference type="TAIR" id="AT1G54957"/>
<dbReference type="InParanoid" id="A0A1P8AVP6"/>
<dbReference type="OrthoDB" id="1095936at2759"/>
<dbReference type="PRO" id="PR:A0A1P8AVP6"/>
<dbReference type="Proteomes" id="UP000006548">
    <property type="component" value="Chromosome 1"/>
</dbReference>
<dbReference type="ExpressionAtlas" id="A0A1P8AVP6">
    <property type="expression patterns" value="baseline and differential"/>
</dbReference>
<dbReference type="GO" id="GO:0048046">
    <property type="term" value="C:apoplast"/>
    <property type="evidence" value="ECO:0000250"/>
    <property type="project" value="UniProtKB"/>
</dbReference>
<dbReference type="GO" id="GO:0005886">
    <property type="term" value="C:plasma membrane"/>
    <property type="evidence" value="ECO:0007669"/>
    <property type="project" value="UniProtKB-SubCell"/>
</dbReference>
<dbReference type="GO" id="GO:0030275">
    <property type="term" value="F:LRR domain binding"/>
    <property type="evidence" value="ECO:0000250"/>
    <property type="project" value="UniProtKB"/>
</dbReference>
<dbReference type="GO" id="GO:0033612">
    <property type="term" value="F:receptor serine/threonine kinase binding"/>
    <property type="evidence" value="ECO:0000250"/>
    <property type="project" value="UniProtKB"/>
</dbReference>
<organism>
    <name type="scientific">Arabidopsis thaliana</name>
    <name type="common">Mouse-ear cress</name>
    <dbReference type="NCBI Taxonomy" id="3702"/>
    <lineage>
        <taxon>Eukaryota</taxon>
        <taxon>Viridiplantae</taxon>
        <taxon>Streptophyta</taxon>
        <taxon>Embryophyta</taxon>
        <taxon>Tracheophyta</taxon>
        <taxon>Spermatophyta</taxon>
        <taxon>Magnoliopsida</taxon>
        <taxon>eudicotyledons</taxon>
        <taxon>Gunneridae</taxon>
        <taxon>Pentapetalae</taxon>
        <taxon>rosids</taxon>
        <taxon>malvids</taxon>
        <taxon>Brassicales</taxon>
        <taxon>Brassicaceae</taxon>
        <taxon>Camelineae</taxon>
        <taxon>Arabidopsis</taxon>
    </lineage>
</organism>
<sequence>MNKALVWLITLLFLIFSATPNRVLAHPPYISPKTRAREGVWDHKIMKVRKIGVGASNSGHSPGAGGIP</sequence>
<gene>
    <name evidence="3" type="primary">PROSCOOP22</name>
    <name evidence="3" type="synonym">SCOOP22</name>
    <name evidence="6" type="ordered locus">At1g54957</name>
    <name evidence="7" type="ORF">F14C21</name>
</gene>
<evidence type="ECO:0000250" key="1">
    <source>
        <dbReference type="UniProtKB" id="B3H7I1"/>
    </source>
</evidence>
<evidence type="ECO:0000255" key="2"/>
<evidence type="ECO:0000303" key="3">
    <source>
    </source>
</evidence>
<evidence type="ECO:0000305" key="4"/>
<evidence type="ECO:0000305" key="5">
    <source>
    </source>
</evidence>
<evidence type="ECO:0000312" key="6">
    <source>
        <dbReference type="Araport" id="AT1G54957"/>
    </source>
</evidence>
<evidence type="ECO:0000312" key="7">
    <source>
        <dbReference type="EMBL" id="AC069144"/>
    </source>
</evidence>
<accession>A0A1P8AVP6</accession>
<reference key="1">
    <citation type="journal article" date="2000" name="Nature">
        <title>Sequence and analysis of chromosome 1 of the plant Arabidopsis thaliana.</title>
        <authorList>
            <person name="Theologis A."/>
            <person name="Ecker J.R."/>
            <person name="Palm C.J."/>
            <person name="Federspiel N.A."/>
            <person name="Kaul S."/>
            <person name="White O."/>
            <person name="Alonso J."/>
            <person name="Altafi H."/>
            <person name="Araujo R."/>
            <person name="Bowman C.L."/>
            <person name="Brooks S.Y."/>
            <person name="Buehler E."/>
            <person name="Chan A."/>
            <person name="Chao Q."/>
            <person name="Chen H."/>
            <person name="Cheuk R.F."/>
            <person name="Chin C.W."/>
            <person name="Chung M.K."/>
            <person name="Conn L."/>
            <person name="Conway A.B."/>
            <person name="Conway A.R."/>
            <person name="Creasy T.H."/>
            <person name="Dewar K."/>
            <person name="Dunn P."/>
            <person name="Etgu P."/>
            <person name="Feldblyum T.V."/>
            <person name="Feng J.-D."/>
            <person name="Fong B."/>
            <person name="Fujii C.Y."/>
            <person name="Gill J.E."/>
            <person name="Goldsmith A.D."/>
            <person name="Haas B."/>
            <person name="Hansen N.F."/>
            <person name="Hughes B."/>
            <person name="Huizar L."/>
            <person name="Hunter J.L."/>
            <person name="Jenkins J."/>
            <person name="Johnson-Hopson C."/>
            <person name="Khan S."/>
            <person name="Khaykin E."/>
            <person name="Kim C.J."/>
            <person name="Koo H.L."/>
            <person name="Kremenetskaia I."/>
            <person name="Kurtz D.B."/>
            <person name="Kwan A."/>
            <person name="Lam B."/>
            <person name="Langin-Hooper S."/>
            <person name="Lee A."/>
            <person name="Lee J.M."/>
            <person name="Lenz C.A."/>
            <person name="Li J.H."/>
            <person name="Li Y.-P."/>
            <person name="Lin X."/>
            <person name="Liu S.X."/>
            <person name="Liu Z.A."/>
            <person name="Luros J.S."/>
            <person name="Maiti R."/>
            <person name="Marziali A."/>
            <person name="Militscher J."/>
            <person name="Miranda M."/>
            <person name="Nguyen M."/>
            <person name="Nierman W.C."/>
            <person name="Osborne B.I."/>
            <person name="Pai G."/>
            <person name="Peterson J."/>
            <person name="Pham P.K."/>
            <person name="Rizzo M."/>
            <person name="Rooney T."/>
            <person name="Rowley D."/>
            <person name="Sakano H."/>
            <person name="Salzberg S.L."/>
            <person name="Schwartz J.R."/>
            <person name="Shinn P."/>
            <person name="Southwick A.M."/>
            <person name="Sun H."/>
            <person name="Tallon L.J."/>
            <person name="Tambunga G."/>
            <person name="Toriumi M.J."/>
            <person name="Town C.D."/>
            <person name="Utterback T."/>
            <person name="Van Aken S."/>
            <person name="Vaysberg M."/>
            <person name="Vysotskaia V.S."/>
            <person name="Walker M."/>
            <person name="Wu D."/>
            <person name="Yu G."/>
            <person name="Fraser C.M."/>
            <person name="Venter J.C."/>
            <person name="Davis R.W."/>
        </authorList>
    </citation>
    <scope>NUCLEOTIDE SEQUENCE [LARGE SCALE GENOMIC DNA]</scope>
    <source>
        <strain>cv. Columbia</strain>
    </source>
</reference>
<reference key="2">
    <citation type="journal article" date="2017" name="Plant J.">
        <title>Araport11: a complete reannotation of the Arabidopsis thaliana reference genome.</title>
        <authorList>
            <person name="Cheng C.Y."/>
            <person name="Krishnakumar V."/>
            <person name="Chan A.P."/>
            <person name="Thibaud-Nissen F."/>
            <person name="Schobel S."/>
            <person name="Town C.D."/>
        </authorList>
    </citation>
    <scope>GENOME REANNOTATION</scope>
    <source>
        <strain>cv. Columbia</strain>
    </source>
</reference>
<reference key="3">
    <citation type="journal article" date="2019" name="J. Exp. Bot.">
        <title>The SCOOP12 peptide regulates defense response and root elongation in Arabidopsis thaliana.</title>
        <authorList>
            <person name="Gully K."/>
            <person name="Pelletier S."/>
            <person name="Guillou M.-C."/>
            <person name="Ferrand M."/>
            <person name="Aligon S."/>
            <person name="Pokotylo I."/>
            <person name="Perrin A."/>
            <person name="Vergne E."/>
            <person name="Fagard M."/>
            <person name="Ruelland E."/>
            <person name="Grappin P."/>
            <person name="Bucher E."/>
            <person name="Renou J.-P."/>
            <person name="Aubourg S."/>
        </authorList>
    </citation>
    <scope>GENE FAMILY</scope>
    <source>
        <strain>cv. Columbia</strain>
        <strain>cv. Wassilewskija</strain>
    </source>
</reference>
<reference key="4">
    <citation type="journal article" date="2021" name="Nat. Commun.">
        <title>The Arabidopsis MIK2 receptor elicits immunity by sensing a conserved signature from phytocytokines and microbes.</title>
        <authorList>
            <person name="Hou S."/>
            <person name="Liu D."/>
            <person name="Huang S."/>
            <person name="Luo D."/>
            <person name="Liu Z."/>
            <person name="Xiang Q."/>
            <person name="Wang P."/>
            <person name="Mu R."/>
            <person name="Han Z."/>
            <person name="Chen S."/>
            <person name="Chai J."/>
            <person name="Shan L."/>
            <person name="He P."/>
        </authorList>
    </citation>
    <scope>GENE FAMILY</scope>
    <scope>NOMENCLATURE</scope>
    <source>
        <strain>cv. Columbia</strain>
    </source>
</reference>
<keyword id="KW-0052">Apoplast</keyword>
<keyword id="KW-1003">Cell membrane</keyword>
<keyword id="KW-0165">Cleavage on pair of basic residues</keyword>
<keyword id="KW-0472">Membrane</keyword>
<keyword id="KW-1185">Reference proteome</keyword>
<keyword id="KW-0964">Secreted</keyword>
<keyword id="KW-0732">Signal</keyword>
<proteinExistence type="inferred from homology"/>
<protein>
    <recommendedName>
        <fullName evidence="3">Serine rich endogenous peptide 22</fullName>
        <shortName evidence="3">AtSCOOP22</shortName>
    </recommendedName>
    <alternativeName>
        <fullName evidence="3">Phytocytokine SCOOP22</fullName>
    </alternativeName>
    <alternativeName>
        <fullName evidence="3">Precursor of serine rich endogenous peptide phytocytokine 22</fullName>
    </alternativeName>
</protein>
<comment type="function">
    <text evidence="1">Brassicaceae-specific phytocytokine (plant endogenous peptide released into the apoplast) perceived by MIK2 in a BAK1/SERK3 and SERK4 coreceptors-dependent manner, that modulates various physiological and antimicrobial processes including growth prevention and reactive oxygen species (ROS) response regulation.</text>
</comment>
<comment type="subunit">
    <text evidence="1">Interacts with MIK2 (via extracellular leucine-rich repeat domain); this interaction triggers the formation of complex between MIK2 and the BAK1/SERK3 and SERK4 coreceptors, and subsequent BAK1 activation by phosphorylation.</text>
</comment>
<comment type="subcellular location">
    <subcellularLocation>
        <location evidence="1">Cell membrane</location>
    </subcellularLocation>
    <subcellularLocation>
        <location evidence="1">Secreted</location>
        <location evidence="1">Extracellular space</location>
        <location evidence="1">Apoplast</location>
    </subcellularLocation>
    <text evidence="1">The precursor of SCOOP22, PROSCOOP22, accumulates at the plasma membrane and is proteolytically cleaved to release the SCOOP22 in the apoplasm.</text>
</comment>
<comment type="similarity">
    <text evidence="4">Belongs to the serine rich endogenous peptide (SCOOP) phytocytokine family.</text>
</comment>
<feature type="signal peptide" evidence="2">
    <location>
        <begin position="1"/>
        <end position="25"/>
    </location>
</feature>
<feature type="propeptide" id="PRO_0000457256" description="Removed in mature form" evidence="1">
    <location>
        <begin position="26"/>
        <end status="unknown"/>
    </location>
</feature>
<feature type="peptide" id="PRO_0000457257" description="Serine rich endogenous peptide 22" evidence="1">
    <location>
        <begin status="unknown"/>
        <end position="68"/>
    </location>
</feature>
<feature type="short sequence motif" description="SCOOP motif" evidence="5">
    <location>
        <begin position="50"/>
        <end position="64"/>
    </location>
</feature>
<feature type="short sequence motif" description="SxS motif essential for MIK2 binding" evidence="1">
    <location>
        <begin position="56"/>
        <end position="58"/>
    </location>
</feature>
<name>SOP22_ARATH</name>